<comment type="function">
    <text evidence="2">Binds low density lipoprotein /LDL, the major cholesterol-carrying lipoprotein of plasma, and transports it into cells by endocytosis. In order to be internalized, the receptor-ligand complexes must first cluster into clathrin-coated pits. Forms a ternary complex with PGRMC1 and TMEM97 receptors which increases LDLR-mediated LDL internalization.</text>
</comment>
<comment type="subunit">
    <text evidence="2 4">Interacts (via NPXY motif) with DAB2 (via PID domain); the interaction is impaired by tyrosine phosphorylation of the NPXY motif (By similarity). Interacts (via NPXY motif) with LDLRAP1 (via PID domain). Interacts with ARRB1. Interacts with SNX17. Interacts with the full-length immature form of PCSK9 (via C-terminus) (By similarity). Interacts with PGRMC1 and TMEM97; the interaction increases LDL internalization (By similarity).</text>
</comment>
<comment type="subcellular location">
    <subcellularLocation>
        <location evidence="2">Cell membrane</location>
        <topology evidence="3">Single-pass type I membrane protein</topology>
    </subcellularLocation>
    <subcellularLocation>
        <location evidence="2">Membrane</location>
        <location evidence="2">Clathrin-coated pit</location>
    </subcellularLocation>
    <subcellularLocation>
        <location evidence="2">Golgi apparatus</location>
    </subcellularLocation>
    <subcellularLocation>
        <location evidence="2">Early endosome</location>
    </subcellularLocation>
    <subcellularLocation>
        <location evidence="2">Late endosome</location>
    </subcellularLocation>
    <subcellularLocation>
        <location evidence="2">Lysosome</location>
    </subcellularLocation>
    <text evidence="2">Rapidly endocytosed upon ligand binding.</text>
</comment>
<comment type="domain">
    <text evidence="2">The NPXY motif mediates the interaction with the clathrin adapter DAB2 and with LDLRAP1 which are involved in receptor internalization. A few residues outside the motif also play a role in the interaction.</text>
</comment>
<comment type="PTM">
    <text evidence="2">N- and O-glycosylated.</text>
</comment>
<comment type="PTM">
    <text evidence="2">Ubiquitinated by MYLIP leading to degradation.</text>
</comment>
<comment type="similarity">
    <text evidence="9">Belongs to the LDLR family.</text>
</comment>
<organism>
    <name type="scientific">Rattus norvegicus</name>
    <name type="common">Rat</name>
    <dbReference type="NCBI Taxonomy" id="10116"/>
    <lineage>
        <taxon>Eukaryota</taxon>
        <taxon>Metazoa</taxon>
        <taxon>Chordata</taxon>
        <taxon>Craniata</taxon>
        <taxon>Vertebrata</taxon>
        <taxon>Euteleostomi</taxon>
        <taxon>Mammalia</taxon>
        <taxon>Eutheria</taxon>
        <taxon>Euarchontoglires</taxon>
        <taxon>Glires</taxon>
        <taxon>Rodentia</taxon>
        <taxon>Myomorpha</taxon>
        <taxon>Muroidea</taxon>
        <taxon>Muridae</taxon>
        <taxon>Murinae</taxon>
        <taxon>Rattus</taxon>
    </lineage>
</organism>
<feature type="signal peptide" evidence="3">
    <location>
        <begin position="1"/>
        <end position="21"/>
    </location>
</feature>
<feature type="chain" id="PRO_0000017314" description="Low-density lipoprotein receptor">
    <location>
        <begin position="22"/>
        <end position="879"/>
    </location>
</feature>
<feature type="topological domain" description="Extracellular" evidence="3">
    <location>
        <begin position="22"/>
        <end position="807"/>
    </location>
</feature>
<feature type="transmembrane region" description="Helical" evidence="5">
    <location>
        <begin position="808"/>
        <end position="829"/>
    </location>
</feature>
<feature type="topological domain" description="Cytoplasmic" evidence="2">
    <location>
        <begin position="830"/>
        <end position="879"/>
    </location>
</feature>
<feature type="domain" description="LDL-receptor class A 1" evidence="7">
    <location>
        <begin position="25"/>
        <end position="65"/>
    </location>
</feature>
<feature type="domain" description="LDL-receptor class A 2" evidence="7">
    <location>
        <begin position="66"/>
        <end position="106"/>
    </location>
</feature>
<feature type="domain" description="LDL-receptor class A 3" evidence="7">
    <location>
        <begin position="107"/>
        <end position="145"/>
    </location>
</feature>
<feature type="domain" description="LDL-receptor class A 4" evidence="7">
    <location>
        <begin position="146"/>
        <end position="186"/>
    </location>
</feature>
<feature type="domain" description="LDL-receptor class A 5" evidence="7">
    <location>
        <begin position="196"/>
        <end position="234"/>
    </location>
</feature>
<feature type="domain" description="LDL-receptor class A 6" evidence="7">
    <location>
        <begin position="235"/>
        <end position="273"/>
    </location>
</feature>
<feature type="domain" description="LDL-receptor class A 7" evidence="7">
    <location>
        <begin position="275"/>
        <end position="314"/>
    </location>
</feature>
<feature type="domain" description="EGF-like 1" evidence="6">
    <location>
        <begin position="315"/>
        <end position="354"/>
    </location>
</feature>
<feature type="domain" description="EGF-like 2; calcium-binding" evidence="6">
    <location>
        <begin position="355"/>
        <end position="394"/>
    </location>
</feature>
<feature type="repeat" description="LDL-receptor class B 1">
    <location>
        <begin position="398"/>
        <end position="439"/>
    </location>
</feature>
<feature type="repeat" description="LDL-receptor class B 2">
    <location>
        <begin position="440"/>
        <end position="485"/>
    </location>
</feature>
<feature type="repeat" description="LDL-receptor class B 3">
    <location>
        <begin position="486"/>
        <end position="528"/>
    </location>
</feature>
<feature type="repeat" description="LDL-receptor class B 4">
    <location>
        <begin position="529"/>
        <end position="572"/>
    </location>
</feature>
<feature type="repeat" description="LDL-receptor class B 5">
    <location>
        <begin position="573"/>
        <end position="615"/>
    </location>
</feature>
<feature type="repeat" description="LDL-receptor class B 6">
    <location>
        <begin position="616"/>
        <end position="658"/>
    </location>
</feature>
<feature type="domain" description="EGF-like 3" evidence="6">
    <location>
        <begin position="663"/>
        <end position="712"/>
    </location>
</feature>
<feature type="region of interest" description="Clustered O-linked oligosaccharides">
    <location>
        <begin position="717"/>
        <end position="788"/>
    </location>
</feature>
<feature type="region of interest" description="Disordered" evidence="8">
    <location>
        <begin position="718"/>
        <end position="797"/>
    </location>
</feature>
<feature type="region of interest" description="Required for MYLIP-triggered down-regulation of LDLR" evidence="2">
    <location>
        <begin position="830"/>
        <end position="879"/>
    </location>
</feature>
<feature type="short sequence motif" description="NPXY motif" evidence="2">
    <location>
        <begin position="842"/>
        <end position="847"/>
    </location>
</feature>
<feature type="compositionally biased region" description="Polar residues" evidence="8">
    <location>
        <begin position="718"/>
        <end position="736"/>
    </location>
</feature>
<feature type="compositionally biased region" description="Basic and acidic residues" evidence="8">
    <location>
        <begin position="740"/>
        <end position="762"/>
    </location>
</feature>
<feature type="compositionally biased region" description="Polar residues" evidence="8">
    <location>
        <begin position="763"/>
        <end position="772"/>
    </location>
</feature>
<feature type="compositionally biased region" description="Low complexity" evidence="8">
    <location>
        <begin position="779"/>
        <end position="791"/>
    </location>
</feature>
<feature type="modified residue" description="Phosphothreonine" evidence="10">
    <location>
        <position position="717"/>
    </location>
</feature>
<feature type="modified residue" description="Phosphothreonine" evidence="10">
    <location>
        <position position="724"/>
    </location>
</feature>
<feature type="modified residue" description="Phosphothreonine" evidence="10">
    <location>
        <position position="732"/>
    </location>
</feature>
<feature type="modified residue" description="Phosphothreonine" evidence="10">
    <location>
        <position position="733"/>
    </location>
</feature>
<feature type="modified residue" description="Phosphoserine" evidence="10">
    <location>
        <position position="734"/>
    </location>
</feature>
<feature type="glycosylation site" description="N-linked (GlcNAc...) asparagine" evidence="5">
    <location>
        <position position="97"/>
    </location>
</feature>
<feature type="glycosylation site" description="N-linked (GlcNAc...) asparagine" evidence="5">
    <location>
        <position position="156"/>
    </location>
</feature>
<feature type="glycosylation site" description="N-linked (GlcNAc...) asparagine" evidence="5">
    <location>
        <position position="273"/>
    </location>
</feature>
<feature type="glycosylation site" description="N-linked (GlcNAc...) asparagine" evidence="5">
    <location>
        <position position="657"/>
    </location>
</feature>
<feature type="disulfide bond" evidence="1">
    <location>
        <begin position="27"/>
        <end position="39"/>
    </location>
</feature>
<feature type="disulfide bond" evidence="1">
    <location>
        <begin position="34"/>
        <end position="52"/>
    </location>
</feature>
<feature type="disulfide bond" evidence="1">
    <location>
        <begin position="46"/>
        <end position="63"/>
    </location>
</feature>
<feature type="disulfide bond" evidence="1">
    <location>
        <begin position="68"/>
        <end position="82"/>
    </location>
</feature>
<feature type="disulfide bond" evidence="1">
    <location>
        <begin position="75"/>
        <end position="95"/>
    </location>
</feature>
<feature type="disulfide bond" evidence="1">
    <location>
        <begin position="89"/>
        <end position="104"/>
    </location>
</feature>
<feature type="disulfide bond" evidence="1">
    <location>
        <begin position="109"/>
        <end position="121"/>
    </location>
</feature>
<feature type="disulfide bond" evidence="1">
    <location>
        <begin position="116"/>
        <end position="134"/>
    </location>
</feature>
<feature type="disulfide bond" evidence="1">
    <location>
        <begin position="128"/>
        <end position="143"/>
    </location>
</feature>
<feature type="disulfide bond" evidence="1">
    <location>
        <begin position="148"/>
        <end position="160"/>
    </location>
</feature>
<feature type="disulfide bond" evidence="1">
    <location>
        <begin position="155"/>
        <end position="173"/>
    </location>
</feature>
<feature type="disulfide bond" evidence="1">
    <location>
        <begin position="167"/>
        <end position="184"/>
    </location>
</feature>
<feature type="disulfide bond" evidence="1">
    <location>
        <begin position="198"/>
        <end position="210"/>
    </location>
</feature>
<feature type="disulfide bond" evidence="1">
    <location>
        <begin position="205"/>
        <end position="223"/>
    </location>
</feature>
<feature type="disulfide bond" evidence="1">
    <location>
        <begin position="217"/>
        <end position="232"/>
    </location>
</feature>
<feature type="disulfide bond" evidence="1">
    <location>
        <begin position="237"/>
        <end position="249"/>
    </location>
</feature>
<feature type="disulfide bond" evidence="1">
    <location>
        <begin position="244"/>
        <end position="262"/>
    </location>
</feature>
<feature type="disulfide bond" evidence="1">
    <location>
        <begin position="256"/>
        <end position="271"/>
    </location>
</feature>
<feature type="disulfide bond" evidence="1">
    <location>
        <begin position="277"/>
        <end position="290"/>
    </location>
</feature>
<feature type="disulfide bond" evidence="1">
    <location>
        <begin position="285"/>
        <end position="303"/>
    </location>
</feature>
<feature type="disulfide bond" evidence="1">
    <location>
        <begin position="297"/>
        <end position="314"/>
    </location>
</feature>
<feature type="disulfide bond" evidence="1">
    <location>
        <begin position="319"/>
        <end position="330"/>
    </location>
</feature>
<feature type="disulfide bond" evidence="1">
    <location>
        <begin position="326"/>
        <end position="339"/>
    </location>
</feature>
<feature type="disulfide bond" evidence="1">
    <location>
        <begin position="341"/>
        <end position="353"/>
    </location>
</feature>
<feature type="disulfide bond" evidence="1">
    <location>
        <begin position="359"/>
        <end position="369"/>
    </location>
</feature>
<feature type="disulfide bond" evidence="1">
    <location>
        <begin position="365"/>
        <end position="378"/>
    </location>
</feature>
<feature type="disulfide bond" evidence="1">
    <location>
        <begin position="380"/>
        <end position="393"/>
    </location>
</feature>
<feature type="disulfide bond" evidence="1">
    <location>
        <begin position="667"/>
        <end position="681"/>
    </location>
</feature>
<feature type="disulfide bond" evidence="1">
    <location>
        <begin position="677"/>
        <end position="696"/>
    </location>
</feature>
<feature type="disulfide bond" evidence="1">
    <location>
        <begin position="698"/>
        <end position="711"/>
    </location>
</feature>
<dbReference type="EMBL" id="X13722">
    <property type="protein sequence ID" value="CAA32001.1"/>
    <property type="molecule type" value="mRNA"/>
</dbReference>
<dbReference type="PIR" id="S03430">
    <property type="entry name" value="QRRTLD"/>
</dbReference>
<dbReference type="RefSeq" id="NP_786938.1">
    <property type="nucleotide sequence ID" value="NM_175762.2"/>
</dbReference>
<dbReference type="SMR" id="P35952"/>
<dbReference type="FunCoup" id="P35952">
    <property type="interactions" value="1366"/>
</dbReference>
<dbReference type="STRING" id="10116.ENSRNOP00000013496"/>
<dbReference type="GlyCosmos" id="P35952">
    <property type="glycosylation" value="4 sites, No reported glycans"/>
</dbReference>
<dbReference type="GlyGen" id="P35952">
    <property type="glycosylation" value="4 sites"/>
</dbReference>
<dbReference type="iPTMnet" id="P35952"/>
<dbReference type="PhosphoSitePlus" id="P35952"/>
<dbReference type="jPOST" id="P35952"/>
<dbReference type="PaxDb" id="10116-ENSRNOP00000013496"/>
<dbReference type="GeneID" id="300438"/>
<dbReference type="KEGG" id="rno:300438"/>
<dbReference type="UCSC" id="RGD:2998">
    <property type="organism name" value="rat"/>
</dbReference>
<dbReference type="AGR" id="RGD:2998"/>
<dbReference type="CTD" id="3949"/>
<dbReference type="RGD" id="2998">
    <property type="gene designation" value="Ldlr"/>
</dbReference>
<dbReference type="eggNOG" id="KOG1215">
    <property type="taxonomic scope" value="Eukaryota"/>
</dbReference>
<dbReference type="InParanoid" id="P35952"/>
<dbReference type="PhylomeDB" id="P35952"/>
<dbReference type="Reactome" id="R-RNO-8856825">
    <property type="pathway name" value="Cargo recognition for clathrin-mediated endocytosis"/>
</dbReference>
<dbReference type="Reactome" id="R-RNO-8856828">
    <property type="pathway name" value="Clathrin-mediated endocytosis"/>
</dbReference>
<dbReference type="Reactome" id="R-RNO-8964026">
    <property type="pathway name" value="Chylomicron clearance"/>
</dbReference>
<dbReference type="Reactome" id="R-RNO-8964038">
    <property type="pathway name" value="LDL clearance"/>
</dbReference>
<dbReference type="PRO" id="PR:P35952"/>
<dbReference type="Proteomes" id="UP000002494">
    <property type="component" value="Unplaced"/>
</dbReference>
<dbReference type="GO" id="GO:0045177">
    <property type="term" value="C:apical part of cell"/>
    <property type="evidence" value="ECO:0000266"/>
    <property type="project" value="RGD"/>
</dbReference>
<dbReference type="GO" id="GO:0016323">
    <property type="term" value="C:basolateral plasma membrane"/>
    <property type="evidence" value="ECO:0000266"/>
    <property type="project" value="RGD"/>
</dbReference>
<dbReference type="GO" id="GO:0005901">
    <property type="term" value="C:caveola"/>
    <property type="evidence" value="ECO:0000314"/>
    <property type="project" value="RGD"/>
</dbReference>
<dbReference type="GO" id="GO:0009986">
    <property type="term" value="C:cell surface"/>
    <property type="evidence" value="ECO:0000250"/>
    <property type="project" value="UniProtKB"/>
</dbReference>
<dbReference type="GO" id="GO:0005905">
    <property type="term" value="C:clathrin-coated pit"/>
    <property type="evidence" value="ECO:0000266"/>
    <property type="project" value="RGD"/>
</dbReference>
<dbReference type="GO" id="GO:0005769">
    <property type="term" value="C:early endosome"/>
    <property type="evidence" value="ECO:0000250"/>
    <property type="project" value="UniProtKB"/>
</dbReference>
<dbReference type="GO" id="GO:0005768">
    <property type="term" value="C:endosome"/>
    <property type="evidence" value="ECO:0000266"/>
    <property type="project" value="RGD"/>
</dbReference>
<dbReference type="GO" id="GO:0009897">
    <property type="term" value="C:external side of plasma membrane"/>
    <property type="evidence" value="ECO:0000266"/>
    <property type="project" value="RGD"/>
</dbReference>
<dbReference type="GO" id="GO:0005794">
    <property type="term" value="C:Golgi apparatus"/>
    <property type="evidence" value="ECO:0000250"/>
    <property type="project" value="UniProtKB"/>
</dbReference>
<dbReference type="GO" id="GO:0005770">
    <property type="term" value="C:late endosome"/>
    <property type="evidence" value="ECO:0000250"/>
    <property type="project" value="UniProtKB"/>
</dbReference>
<dbReference type="GO" id="GO:0034362">
    <property type="term" value="C:low-density lipoprotein particle"/>
    <property type="evidence" value="ECO:0007669"/>
    <property type="project" value="UniProtKB-KW"/>
</dbReference>
<dbReference type="GO" id="GO:0005764">
    <property type="term" value="C:lysosome"/>
    <property type="evidence" value="ECO:0000250"/>
    <property type="project" value="UniProtKB"/>
</dbReference>
<dbReference type="GO" id="GO:1990666">
    <property type="term" value="C:PCSK9-LDLR complex"/>
    <property type="evidence" value="ECO:0000266"/>
    <property type="project" value="RGD"/>
</dbReference>
<dbReference type="GO" id="GO:0005886">
    <property type="term" value="C:plasma membrane"/>
    <property type="evidence" value="ECO:0000266"/>
    <property type="project" value="RGD"/>
</dbReference>
<dbReference type="GO" id="GO:0043235">
    <property type="term" value="C:receptor complex"/>
    <property type="evidence" value="ECO:0000266"/>
    <property type="project" value="RGD"/>
</dbReference>
<dbReference type="GO" id="GO:0055038">
    <property type="term" value="C:recycling endosome membrane"/>
    <property type="evidence" value="ECO:0000314"/>
    <property type="project" value="RGD"/>
</dbReference>
<dbReference type="GO" id="GO:0036477">
    <property type="term" value="C:somatodendritic compartment"/>
    <property type="evidence" value="ECO:0000266"/>
    <property type="project" value="RGD"/>
</dbReference>
<dbReference type="GO" id="GO:0097443">
    <property type="term" value="C:sorting endosome"/>
    <property type="evidence" value="ECO:0000266"/>
    <property type="project" value="RGD"/>
</dbReference>
<dbReference type="GO" id="GO:0001540">
    <property type="term" value="F:amyloid-beta binding"/>
    <property type="evidence" value="ECO:0000266"/>
    <property type="project" value="RGD"/>
</dbReference>
<dbReference type="GO" id="GO:0005509">
    <property type="term" value="F:calcium ion binding"/>
    <property type="evidence" value="ECO:0007669"/>
    <property type="project" value="InterPro"/>
</dbReference>
<dbReference type="GO" id="GO:0042802">
    <property type="term" value="F:identical protein binding"/>
    <property type="evidence" value="ECO:0000266"/>
    <property type="project" value="RGD"/>
</dbReference>
<dbReference type="GO" id="GO:0071813">
    <property type="term" value="F:lipoprotein particle binding"/>
    <property type="evidence" value="ECO:0000318"/>
    <property type="project" value="GO_Central"/>
</dbReference>
<dbReference type="GO" id="GO:0030169">
    <property type="term" value="F:low-density lipoprotein particle binding"/>
    <property type="evidence" value="ECO:0000266"/>
    <property type="project" value="RGD"/>
</dbReference>
<dbReference type="GO" id="GO:0005041">
    <property type="term" value="F:low-density lipoprotein particle receptor activity"/>
    <property type="evidence" value="ECO:0000314"/>
    <property type="project" value="RGD"/>
</dbReference>
<dbReference type="GO" id="GO:0060090">
    <property type="term" value="F:molecular adaptor activity"/>
    <property type="evidence" value="ECO:0000266"/>
    <property type="project" value="RGD"/>
</dbReference>
<dbReference type="GO" id="GO:0002020">
    <property type="term" value="F:protease binding"/>
    <property type="evidence" value="ECO:0000266"/>
    <property type="project" value="RGD"/>
</dbReference>
<dbReference type="GO" id="GO:0030229">
    <property type="term" value="F:very-low-density lipoprotein particle receptor activity"/>
    <property type="evidence" value="ECO:0000266"/>
    <property type="project" value="RGD"/>
</dbReference>
<dbReference type="GO" id="GO:0097242">
    <property type="term" value="P:amyloid-beta clearance"/>
    <property type="evidence" value="ECO:0000266"/>
    <property type="project" value="RGD"/>
</dbReference>
<dbReference type="GO" id="GO:0150094">
    <property type="term" value="P:amyloid-beta clearance by cellular catabolic process"/>
    <property type="evidence" value="ECO:0000266"/>
    <property type="project" value="RGD"/>
</dbReference>
<dbReference type="GO" id="GO:0048844">
    <property type="term" value="P:artery morphogenesis"/>
    <property type="evidence" value="ECO:0000266"/>
    <property type="project" value="RGD"/>
</dbReference>
<dbReference type="GO" id="GO:0071398">
    <property type="term" value="P:cellular response to fatty acid"/>
    <property type="evidence" value="ECO:0000266"/>
    <property type="project" value="RGD"/>
</dbReference>
<dbReference type="GO" id="GO:0071404">
    <property type="term" value="P:cellular response to low-density lipoprotein particle stimulus"/>
    <property type="evidence" value="ECO:0000266"/>
    <property type="project" value="RGD"/>
</dbReference>
<dbReference type="GO" id="GO:0042632">
    <property type="term" value="P:cholesterol homeostasis"/>
    <property type="evidence" value="ECO:0000270"/>
    <property type="project" value="RGD"/>
</dbReference>
<dbReference type="GO" id="GO:0070508">
    <property type="term" value="P:cholesterol import"/>
    <property type="evidence" value="ECO:0000266"/>
    <property type="project" value="RGD"/>
</dbReference>
<dbReference type="GO" id="GO:0008203">
    <property type="term" value="P:cholesterol metabolic process"/>
    <property type="evidence" value="ECO:0000266"/>
    <property type="project" value="RGD"/>
</dbReference>
<dbReference type="GO" id="GO:0030301">
    <property type="term" value="P:cholesterol transport"/>
    <property type="evidence" value="ECO:0000266"/>
    <property type="project" value="RGD"/>
</dbReference>
<dbReference type="GO" id="GO:0006897">
    <property type="term" value="P:endocytosis"/>
    <property type="evidence" value="ECO:0000315"/>
    <property type="project" value="RGD"/>
</dbReference>
<dbReference type="GO" id="GO:0051649">
    <property type="term" value="P:establishment of localization in cell"/>
    <property type="evidence" value="ECO:0000266"/>
    <property type="project" value="RGD"/>
</dbReference>
<dbReference type="GO" id="GO:0034384">
    <property type="term" value="P:high-density lipoprotein particle clearance"/>
    <property type="evidence" value="ECO:0000266"/>
    <property type="project" value="RGD"/>
</dbReference>
<dbReference type="GO" id="GO:0030299">
    <property type="term" value="P:intestinal cholesterol absorption"/>
    <property type="evidence" value="ECO:0000266"/>
    <property type="project" value="RGD"/>
</dbReference>
<dbReference type="GO" id="GO:0006629">
    <property type="term" value="P:lipid metabolic process"/>
    <property type="evidence" value="ECO:0000266"/>
    <property type="project" value="RGD"/>
</dbReference>
<dbReference type="GO" id="GO:0042159">
    <property type="term" value="P:lipoprotein catabolic process"/>
    <property type="evidence" value="ECO:0000266"/>
    <property type="project" value="RGD"/>
</dbReference>
<dbReference type="GO" id="GO:0042157">
    <property type="term" value="P:lipoprotein metabolic process"/>
    <property type="evidence" value="ECO:0000266"/>
    <property type="project" value="RGD"/>
</dbReference>
<dbReference type="GO" id="GO:0007616">
    <property type="term" value="P:long-term memory"/>
    <property type="evidence" value="ECO:0000266"/>
    <property type="project" value="RGD"/>
</dbReference>
<dbReference type="GO" id="GO:0034383">
    <property type="term" value="P:low-density lipoprotein particle clearance"/>
    <property type="evidence" value="ECO:0000266"/>
    <property type="project" value="RGD"/>
</dbReference>
<dbReference type="GO" id="GO:1905907">
    <property type="term" value="P:negative regulation of amyloid fibril formation"/>
    <property type="evidence" value="ECO:0000266"/>
    <property type="project" value="RGD"/>
</dbReference>
<dbReference type="GO" id="GO:0061889">
    <property type="term" value="P:negative regulation of astrocyte activation"/>
    <property type="evidence" value="ECO:0000266"/>
    <property type="project" value="RGD"/>
</dbReference>
<dbReference type="GO" id="GO:0010629">
    <property type="term" value="P:negative regulation of gene expression"/>
    <property type="evidence" value="ECO:0000266"/>
    <property type="project" value="RGD"/>
</dbReference>
<dbReference type="GO" id="GO:0010989">
    <property type="term" value="P:negative regulation of low-density lipoprotein particle clearance"/>
    <property type="evidence" value="ECO:0000266"/>
    <property type="project" value="RGD"/>
</dbReference>
<dbReference type="GO" id="GO:1903979">
    <property type="term" value="P:negative regulation of microglial cell activation"/>
    <property type="evidence" value="ECO:0000266"/>
    <property type="project" value="RGD"/>
</dbReference>
<dbReference type="GO" id="GO:0051248">
    <property type="term" value="P:negative regulation of protein metabolic process"/>
    <property type="evidence" value="ECO:0000266"/>
    <property type="project" value="RGD"/>
</dbReference>
<dbReference type="GO" id="GO:0001920">
    <property type="term" value="P:negative regulation of receptor recycling"/>
    <property type="evidence" value="ECO:0000266"/>
    <property type="project" value="RGD"/>
</dbReference>
<dbReference type="GO" id="GO:0006909">
    <property type="term" value="P:phagocytosis"/>
    <property type="evidence" value="ECO:0000266"/>
    <property type="project" value="RGD"/>
</dbReference>
<dbReference type="GO" id="GO:0015914">
    <property type="term" value="P:phospholipid transport"/>
    <property type="evidence" value="ECO:0000266"/>
    <property type="project" value="RGD"/>
</dbReference>
<dbReference type="GO" id="GO:0034381">
    <property type="term" value="P:plasma lipoprotein particle clearance"/>
    <property type="evidence" value="ECO:0000266"/>
    <property type="project" value="RGD"/>
</dbReference>
<dbReference type="GO" id="GO:0010628">
    <property type="term" value="P:positive regulation of gene expression"/>
    <property type="evidence" value="ECO:0000266"/>
    <property type="project" value="RGD"/>
</dbReference>
<dbReference type="GO" id="GO:0050729">
    <property type="term" value="P:positive regulation of inflammatory response"/>
    <property type="evidence" value="ECO:0000266"/>
    <property type="project" value="RGD"/>
</dbReference>
<dbReference type="GO" id="GO:1905167">
    <property type="term" value="P:positive regulation of lysosomal protein catabolic process"/>
    <property type="evidence" value="ECO:0000266"/>
    <property type="project" value="RGD"/>
</dbReference>
<dbReference type="GO" id="GO:0010867">
    <property type="term" value="P:positive regulation of triglyceride biosynthetic process"/>
    <property type="evidence" value="ECO:0000266"/>
    <property type="project" value="RGD"/>
</dbReference>
<dbReference type="GO" id="GO:0010898">
    <property type="term" value="P:positive regulation of triglyceride catabolic process"/>
    <property type="evidence" value="ECO:0000315"/>
    <property type="project" value="RGD"/>
</dbReference>
<dbReference type="GO" id="GO:0006898">
    <property type="term" value="P:receptor-mediated endocytosis"/>
    <property type="evidence" value="ECO:0000266"/>
    <property type="project" value="RGD"/>
</dbReference>
<dbReference type="GO" id="GO:0090118">
    <property type="term" value="P:receptor-mediated endocytosis involved in cholesterol transport"/>
    <property type="evidence" value="ECO:0000266"/>
    <property type="project" value="RGD"/>
</dbReference>
<dbReference type="GO" id="GO:0090181">
    <property type="term" value="P:regulation of cholesterol metabolic process"/>
    <property type="evidence" value="ECO:0000266"/>
    <property type="project" value="RGD"/>
</dbReference>
<dbReference type="GO" id="GO:0010899">
    <property type="term" value="P:regulation of phosphatidylcholine catabolic process"/>
    <property type="evidence" value="ECO:0000266"/>
    <property type="project" value="RGD"/>
</dbReference>
<dbReference type="GO" id="GO:0051246">
    <property type="term" value="P:regulation of protein metabolic process"/>
    <property type="evidence" value="ECO:0000266"/>
    <property type="project" value="RGD"/>
</dbReference>
<dbReference type="GO" id="GO:0061771">
    <property type="term" value="P:response to caloric restriction"/>
    <property type="evidence" value="ECO:0000266"/>
    <property type="project" value="RGD"/>
</dbReference>
<dbReference type="GO" id="GO:0032355">
    <property type="term" value="P:response to estradiol"/>
    <property type="evidence" value="ECO:0000270"/>
    <property type="project" value="RGD"/>
</dbReference>
<dbReference type="GO" id="GO:0043627">
    <property type="term" value="P:response to estrogen"/>
    <property type="evidence" value="ECO:0000270"/>
    <property type="project" value="RGD"/>
</dbReference>
<dbReference type="GO" id="GO:0045471">
    <property type="term" value="P:response to ethanol"/>
    <property type="evidence" value="ECO:0000270"/>
    <property type="project" value="RGD"/>
</dbReference>
<dbReference type="GO" id="GO:0033762">
    <property type="term" value="P:response to glucagon"/>
    <property type="evidence" value="ECO:0000270"/>
    <property type="project" value="RGD"/>
</dbReference>
<dbReference type="GO" id="GO:0009725">
    <property type="term" value="P:response to hormone"/>
    <property type="evidence" value="ECO:0000270"/>
    <property type="project" value="RGD"/>
</dbReference>
<dbReference type="GO" id="GO:0001666">
    <property type="term" value="P:response to hypoxia"/>
    <property type="evidence" value="ECO:0000270"/>
    <property type="project" value="RGD"/>
</dbReference>
<dbReference type="GO" id="GO:0001523">
    <property type="term" value="P:retinoid metabolic process"/>
    <property type="evidence" value="ECO:0000266"/>
    <property type="project" value="RGD"/>
</dbReference>
<dbReference type="GO" id="GO:0045056">
    <property type="term" value="P:transcytosis"/>
    <property type="evidence" value="ECO:0000266"/>
    <property type="project" value="RGD"/>
</dbReference>
<dbReference type="CDD" id="cd00054">
    <property type="entry name" value="EGF_CA"/>
    <property type="match status" value="1"/>
</dbReference>
<dbReference type="CDD" id="cd00112">
    <property type="entry name" value="LDLa"/>
    <property type="match status" value="6"/>
</dbReference>
<dbReference type="FunFam" id="4.10.400.10:FF:000072">
    <property type="entry name" value="Low density lipoprotein receptor"/>
    <property type="match status" value="1"/>
</dbReference>
<dbReference type="FunFam" id="4.10.400.10:FF:000084">
    <property type="entry name" value="Low density lipoprotein receptor"/>
    <property type="match status" value="1"/>
</dbReference>
<dbReference type="FunFam" id="4.10.400.10:FF:000124">
    <property type="entry name" value="Low density lipoprotein receptor"/>
    <property type="match status" value="1"/>
</dbReference>
<dbReference type="FunFam" id="4.10.400.10:FF:000116">
    <property type="entry name" value="Low-density lipoprotein receptor"/>
    <property type="match status" value="1"/>
</dbReference>
<dbReference type="FunFam" id="2.10.25.10:FF:000009">
    <property type="entry name" value="Low-density lipoprotein receptor isoform 1"/>
    <property type="match status" value="1"/>
</dbReference>
<dbReference type="FunFam" id="2.10.25.10:FF:000052">
    <property type="entry name" value="low-density lipoprotein receptor isoform X1"/>
    <property type="match status" value="1"/>
</dbReference>
<dbReference type="FunFam" id="2.120.10.30:FF:000002">
    <property type="entry name" value="low-density lipoprotein receptor isoform X1"/>
    <property type="match status" value="1"/>
</dbReference>
<dbReference type="FunFam" id="4.10.400.10:FF:000113">
    <property type="entry name" value="Low-density lipoprotein receptor-related protein 8"/>
    <property type="match status" value="1"/>
</dbReference>
<dbReference type="FunFam" id="4.10.400.10:FF:000006">
    <property type="entry name" value="Putative low-density lipoprotein receptor"/>
    <property type="match status" value="1"/>
</dbReference>
<dbReference type="Gene3D" id="4.10.1220.10">
    <property type="entry name" value="EGF-type module"/>
    <property type="match status" value="1"/>
</dbReference>
<dbReference type="Gene3D" id="2.10.25.10">
    <property type="entry name" value="Laminin"/>
    <property type="match status" value="3"/>
</dbReference>
<dbReference type="Gene3D" id="4.10.400.10">
    <property type="entry name" value="Low-density Lipoprotein Receptor"/>
    <property type="match status" value="6"/>
</dbReference>
<dbReference type="Gene3D" id="2.120.10.30">
    <property type="entry name" value="TolB, C-terminal domain"/>
    <property type="match status" value="1"/>
</dbReference>
<dbReference type="InterPro" id="IPR011042">
    <property type="entry name" value="6-blade_b-propeller_TolB-like"/>
</dbReference>
<dbReference type="InterPro" id="IPR001881">
    <property type="entry name" value="EGF-like_Ca-bd_dom"/>
</dbReference>
<dbReference type="InterPro" id="IPR000742">
    <property type="entry name" value="EGF-like_dom"/>
</dbReference>
<dbReference type="InterPro" id="IPR000152">
    <property type="entry name" value="EGF-type_Asp/Asn_hydroxyl_site"/>
</dbReference>
<dbReference type="InterPro" id="IPR018097">
    <property type="entry name" value="EGF_Ca-bd_CS"/>
</dbReference>
<dbReference type="InterPro" id="IPR009030">
    <property type="entry name" value="Growth_fac_rcpt_cys_sf"/>
</dbReference>
<dbReference type="InterPro" id="IPR036055">
    <property type="entry name" value="LDL_receptor-like_sf"/>
</dbReference>
<dbReference type="InterPro" id="IPR051221">
    <property type="entry name" value="LDLR-related"/>
</dbReference>
<dbReference type="InterPro" id="IPR023415">
    <property type="entry name" value="LDLR_class-A_CS"/>
</dbReference>
<dbReference type="InterPro" id="IPR000033">
    <property type="entry name" value="LDLR_classB_rpt"/>
</dbReference>
<dbReference type="InterPro" id="IPR002172">
    <property type="entry name" value="LDrepeatLR_classA_rpt"/>
</dbReference>
<dbReference type="InterPro" id="IPR049883">
    <property type="entry name" value="NOTCH1_EGF-like"/>
</dbReference>
<dbReference type="PANTHER" id="PTHR22722:SF15">
    <property type="entry name" value="LOW-DENSITY LIPOPROTEIN RECEPTOR-RELATED"/>
    <property type="match status" value="1"/>
</dbReference>
<dbReference type="PANTHER" id="PTHR22722">
    <property type="entry name" value="LOW-DENSITY LIPOPROTEIN RECEPTOR-RELATED PROTEIN 2-RELATED"/>
    <property type="match status" value="1"/>
</dbReference>
<dbReference type="Pfam" id="PF07645">
    <property type="entry name" value="EGF_CA"/>
    <property type="match status" value="1"/>
</dbReference>
<dbReference type="Pfam" id="PF14670">
    <property type="entry name" value="FXa_inhibition"/>
    <property type="match status" value="2"/>
</dbReference>
<dbReference type="Pfam" id="PF00057">
    <property type="entry name" value="Ldl_recept_a"/>
    <property type="match status" value="7"/>
</dbReference>
<dbReference type="Pfam" id="PF00058">
    <property type="entry name" value="Ldl_recept_b"/>
    <property type="match status" value="5"/>
</dbReference>
<dbReference type="PRINTS" id="PR00261">
    <property type="entry name" value="LDLRECEPTOR"/>
</dbReference>
<dbReference type="SMART" id="SM00181">
    <property type="entry name" value="EGF"/>
    <property type="match status" value="4"/>
</dbReference>
<dbReference type="SMART" id="SM00179">
    <property type="entry name" value="EGF_CA"/>
    <property type="match status" value="2"/>
</dbReference>
<dbReference type="SMART" id="SM00192">
    <property type="entry name" value="LDLa"/>
    <property type="match status" value="7"/>
</dbReference>
<dbReference type="SMART" id="SM00135">
    <property type="entry name" value="LY"/>
    <property type="match status" value="5"/>
</dbReference>
<dbReference type="SUPFAM" id="SSF57184">
    <property type="entry name" value="Growth factor receptor domain"/>
    <property type="match status" value="1"/>
</dbReference>
<dbReference type="SUPFAM" id="SSF57424">
    <property type="entry name" value="LDL receptor-like module"/>
    <property type="match status" value="7"/>
</dbReference>
<dbReference type="SUPFAM" id="SSF63825">
    <property type="entry name" value="YWTD domain"/>
    <property type="match status" value="1"/>
</dbReference>
<dbReference type="PROSITE" id="PS00010">
    <property type="entry name" value="ASX_HYDROXYL"/>
    <property type="match status" value="2"/>
</dbReference>
<dbReference type="PROSITE" id="PS01186">
    <property type="entry name" value="EGF_2"/>
    <property type="match status" value="2"/>
</dbReference>
<dbReference type="PROSITE" id="PS50026">
    <property type="entry name" value="EGF_3"/>
    <property type="match status" value="2"/>
</dbReference>
<dbReference type="PROSITE" id="PS01187">
    <property type="entry name" value="EGF_CA"/>
    <property type="match status" value="1"/>
</dbReference>
<dbReference type="PROSITE" id="PS01209">
    <property type="entry name" value="LDLRA_1"/>
    <property type="match status" value="7"/>
</dbReference>
<dbReference type="PROSITE" id="PS50068">
    <property type="entry name" value="LDLRA_2"/>
    <property type="match status" value="7"/>
</dbReference>
<dbReference type="PROSITE" id="PS51120">
    <property type="entry name" value="LDLRB"/>
    <property type="match status" value="5"/>
</dbReference>
<protein>
    <recommendedName>
        <fullName>Low-density lipoprotein receptor</fullName>
        <shortName>LDL receptor</shortName>
    </recommendedName>
</protein>
<accession>P35952</accession>
<name>LDLR_RAT</name>
<sequence>MSTADLMLRWAIALLLAAAGVAAEDSCGKNEFQCRDGKCIVSKWVCDGSRECPDGSDESPETCMSVTCRSGEFSCGGRVSRCIPDSWRCDGRTDCENGSDELDCSPKTCSLDEFRCQDGKCISRQFVCDQDWDCLDGSDEAHCAATTCGPAHFRCNSSSCIPSLWACDGDRDCDDGSDEWPQNCGAEDTAAEVVSSPCSSLEFHCGSSECIHRSWVCDGAADCKDKSDEENCAVTTCRPDEFQCADGSCIHGSRQCDREHDCKDMSDELGCINVTQCDGPNKFKCHSGECISLDKVCNSARDCRDWSDEPIKECKTNECLDNNGGCSHICKDLKIGYECLCPSGFRLVDGHQCEDIDECQEPDTCSQLCVNLEGSFKCECRAGFHMDPHTRVCKAVGSIGFLLFTNRHEVRKMTLDRSEYTSLIPNLKNVVALDTEVANNRIYWSDLSQRKIYSAVMDQGTSLSYDAIISGDLHAPDGLAVDWIHGNIYWTDSVPGTVSVADTKGVRRRTLFREKGSRPRAIVVDPVHGFMYWTDWGTPAKIKKGGLNGVDIYSLVTEDIQWPNGITLDLPSGRLYWVDSKLHSISSIDVNGGGRKTILEDEKQLAHPFSLAIYEDKVYWTDVLNEAIFSANRLTGSDVNLVAKNLMSPEDIVLFHNVTQPRGVNWCEATVLPNGGCQYMCLPAPQISAHSPKFTCACPDGMLLAKDMRSCLPEVDTVPTTQGTSTIGPVVTTSAAVSLKRKEDPSATRHKEDPSATRHNEDPSATSTSRQPGDTPELSTVESVTVSSQVQGDMAGRGDEVQRHGVGFLSIFLPIALVALLVFGAILLWRNWRLRNINSINFDNPVYQKTTEDEIHICRSQDGYTYPSRQMVSLEDDVA</sequence>
<proteinExistence type="evidence at protein level"/>
<evidence type="ECO:0000250" key="1"/>
<evidence type="ECO:0000250" key="2">
    <source>
        <dbReference type="UniProtKB" id="P01130"/>
    </source>
</evidence>
<evidence type="ECO:0000250" key="3">
    <source>
        <dbReference type="UniProtKB" id="P01131"/>
    </source>
</evidence>
<evidence type="ECO:0000250" key="4">
    <source>
        <dbReference type="UniProtKB" id="P35951"/>
    </source>
</evidence>
<evidence type="ECO:0000255" key="5"/>
<evidence type="ECO:0000255" key="6">
    <source>
        <dbReference type="PROSITE-ProRule" id="PRU00076"/>
    </source>
</evidence>
<evidence type="ECO:0000255" key="7">
    <source>
        <dbReference type="PROSITE-ProRule" id="PRU00124"/>
    </source>
</evidence>
<evidence type="ECO:0000256" key="8">
    <source>
        <dbReference type="SAM" id="MobiDB-lite"/>
    </source>
</evidence>
<evidence type="ECO:0000305" key="9"/>
<evidence type="ECO:0007744" key="10">
    <source>
    </source>
</evidence>
<keyword id="KW-1003">Cell membrane</keyword>
<keyword id="KW-0153">Cholesterol metabolism</keyword>
<keyword id="KW-0168">Coated pit</keyword>
<keyword id="KW-1015">Disulfide bond</keyword>
<keyword id="KW-0245">EGF-like domain</keyword>
<keyword id="KW-0254">Endocytosis</keyword>
<keyword id="KW-0967">Endosome</keyword>
<keyword id="KW-0325">Glycoprotein</keyword>
<keyword id="KW-0333">Golgi apparatus</keyword>
<keyword id="KW-0427">LDL</keyword>
<keyword id="KW-0443">Lipid metabolism</keyword>
<keyword id="KW-0445">Lipid transport</keyword>
<keyword id="KW-0458">Lysosome</keyword>
<keyword id="KW-0472">Membrane</keyword>
<keyword id="KW-0597">Phosphoprotein</keyword>
<keyword id="KW-0675">Receptor</keyword>
<keyword id="KW-1185">Reference proteome</keyword>
<keyword id="KW-0677">Repeat</keyword>
<keyword id="KW-0732">Signal</keyword>
<keyword id="KW-0753">Steroid metabolism</keyword>
<keyword id="KW-1207">Sterol metabolism</keyword>
<keyword id="KW-0812">Transmembrane</keyword>
<keyword id="KW-1133">Transmembrane helix</keyword>
<keyword id="KW-0813">Transport</keyword>
<keyword id="KW-0832">Ubl conjugation</keyword>
<reference key="1">
    <citation type="journal article" date="1989" name="Nucleic Acids Res.">
        <title>Nucleotide sequence of the rat low density lipoprotein receptor cDNA.</title>
        <authorList>
            <person name="Lee L.Y."/>
            <person name="Mohler W.A."/>
            <person name="Schafer B.L."/>
            <person name="Freudenberger J.S."/>
            <person name="Byrne-Connolly N."/>
            <person name="Eager K.B."/>
            <person name="Mosley S.T."/>
            <person name="Leighton J.K."/>
            <person name="Thrift R.N."/>
            <person name="Davis R.A."/>
            <person name="Tanaka R.D."/>
        </authorList>
    </citation>
    <scope>NUCLEOTIDE SEQUENCE [MRNA]</scope>
    <source>
        <strain>Sprague-Dawley</strain>
    </source>
</reference>
<reference key="2">
    <citation type="journal article" date="2006" name="Proc. Natl. Acad. Sci. U.S.A.">
        <title>Quantitative phosphoproteomics of vasopressin-sensitive renal cells: regulation of aquaporin-2 phosphorylation at two sites.</title>
        <authorList>
            <person name="Hoffert J.D."/>
            <person name="Pisitkun T."/>
            <person name="Wang G."/>
            <person name="Shen R.-F."/>
            <person name="Knepper M.A."/>
        </authorList>
    </citation>
    <scope>PHOSPHORYLATION [LARGE SCALE ANALYSIS] AT THR-717; THR-724; THR-732; THR-733 AND SER-734</scope>
    <scope>IDENTIFICATION BY MASS SPECTROMETRY [LARGE SCALE ANALYSIS]</scope>
</reference>
<gene>
    <name type="primary">Ldlr</name>
</gene>